<name>URK_SERP5</name>
<keyword id="KW-0067">ATP-binding</keyword>
<keyword id="KW-0963">Cytoplasm</keyword>
<keyword id="KW-0418">Kinase</keyword>
<keyword id="KW-0547">Nucleotide-binding</keyword>
<keyword id="KW-0808">Transferase</keyword>
<reference key="1">
    <citation type="submission" date="2007-09" db="EMBL/GenBank/DDBJ databases">
        <title>Complete sequence of chromosome of Serratia proteamaculans 568.</title>
        <authorList>
            <consortium name="US DOE Joint Genome Institute"/>
            <person name="Copeland A."/>
            <person name="Lucas S."/>
            <person name="Lapidus A."/>
            <person name="Barry K."/>
            <person name="Glavina del Rio T."/>
            <person name="Dalin E."/>
            <person name="Tice H."/>
            <person name="Pitluck S."/>
            <person name="Chain P."/>
            <person name="Malfatti S."/>
            <person name="Shin M."/>
            <person name="Vergez L."/>
            <person name="Schmutz J."/>
            <person name="Larimer F."/>
            <person name="Land M."/>
            <person name="Hauser L."/>
            <person name="Kyrpides N."/>
            <person name="Kim E."/>
            <person name="Taghavi S."/>
            <person name="Newman L."/>
            <person name="Vangronsveld J."/>
            <person name="van der Lelie D."/>
            <person name="Richardson P."/>
        </authorList>
    </citation>
    <scope>NUCLEOTIDE SEQUENCE [LARGE SCALE GENOMIC DNA]</scope>
    <source>
        <strain>568</strain>
    </source>
</reference>
<accession>A8GC40</accession>
<gene>
    <name evidence="1" type="primary">udk</name>
    <name type="ordered locus">Spro_1576</name>
</gene>
<evidence type="ECO:0000255" key="1">
    <source>
        <dbReference type="HAMAP-Rule" id="MF_00551"/>
    </source>
</evidence>
<sequence length="213" mass="24622">MTDKPHQCVIIGIAGASASGKSLIASTLYRELRDQVGDEHIGVIPEDSYYKDQTHLTMEERVKTNYDHPSAMDHNLLFQHLQMLKSGKAIELPLYSYTEHTRKKETIHLEPKKVIILEGILLLTDIRLRQEMNFSIFVDTPLDICLMRRMKRDVNERGRSMDSVMAQYQKTVRPMFLQFIDPSKQYADIIVPRGGKNRIAIDILKAKISQFFE</sequence>
<protein>
    <recommendedName>
        <fullName evidence="1">Uridine kinase</fullName>
        <ecNumber evidence="1">2.7.1.48</ecNumber>
    </recommendedName>
    <alternativeName>
        <fullName evidence="1">Cytidine monophosphokinase</fullName>
    </alternativeName>
    <alternativeName>
        <fullName evidence="1">Uridine monophosphokinase</fullName>
    </alternativeName>
</protein>
<proteinExistence type="inferred from homology"/>
<dbReference type="EC" id="2.7.1.48" evidence="1"/>
<dbReference type="EMBL" id="CP000826">
    <property type="protein sequence ID" value="ABV40680.1"/>
    <property type="molecule type" value="Genomic_DNA"/>
</dbReference>
<dbReference type="SMR" id="A8GC40"/>
<dbReference type="STRING" id="399741.Spro_1576"/>
<dbReference type="KEGG" id="spe:Spro_1576"/>
<dbReference type="eggNOG" id="COG0572">
    <property type="taxonomic scope" value="Bacteria"/>
</dbReference>
<dbReference type="HOGENOM" id="CLU_021278_1_2_6"/>
<dbReference type="OrthoDB" id="9777642at2"/>
<dbReference type="UniPathway" id="UPA00574">
    <property type="reaction ID" value="UER00637"/>
</dbReference>
<dbReference type="UniPathway" id="UPA00579">
    <property type="reaction ID" value="UER00640"/>
</dbReference>
<dbReference type="GO" id="GO:0005737">
    <property type="term" value="C:cytoplasm"/>
    <property type="evidence" value="ECO:0007669"/>
    <property type="project" value="UniProtKB-SubCell"/>
</dbReference>
<dbReference type="GO" id="GO:0005524">
    <property type="term" value="F:ATP binding"/>
    <property type="evidence" value="ECO:0007669"/>
    <property type="project" value="UniProtKB-UniRule"/>
</dbReference>
<dbReference type="GO" id="GO:0043771">
    <property type="term" value="F:cytidine kinase activity"/>
    <property type="evidence" value="ECO:0007669"/>
    <property type="project" value="RHEA"/>
</dbReference>
<dbReference type="GO" id="GO:0004849">
    <property type="term" value="F:uridine kinase activity"/>
    <property type="evidence" value="ECO:0007669"/>
    <property type="project" value="UniProtKB-UniRule"/>
</dbReference>
<dbReference type="GO" id="GO:0044211">
    <property type="term" value="P:CTP salvage"/>
    <property type="evidence" value="ECO:0007669"/>
    <property type="project" value="UniProtKB-UniRule"/>
</dbReference>
<dbReference type="GO" id="GO:0044206">
    <property type="term" value="P:UMP salvage"/>
    <property type="evidence" value="ECO:0007669"/>
    <property type="project" value="UniProtKB-UniRule"/>
</dbReference>
<dbReference type="CDD" id="cd02023">
    <property type="entry name" value="UMPK"/>
    <property type="match status" value="1"/>
</dbReference>
<dbReference type="FunFam" id="3.40.50.300:FF:000252">
    <property type="entry name" value="Uridine kinase"/>
    <property type="match status" value="1"/>
</dbReference>
<dbReference type="Gene3D" id="3.40.50.300">
    <property type="entry name" value="P-loop containing nucleotide triphosphate hydrolases"/>
    <property type="match status" value="1"/>
</dbReference>
<dbReference type="HAMAP" id="MF_00551">
    <property type="entry name" value="Uridine_kinase"/>
    <property type="match status" value="1"/>
</dbReference>
<dbReference type="InterPro" id="IPR027417">
    <property type="entry name" value="P-loop_NTPase"/>
</dbReference>
<dbReference type="InterPro" id="IPR006083">
    <property type="entry name" value="PRK/URK"/>
</dbReference>
<dbReference type="InterPro" id="IPR026008">
    <property type="entry name" value="Uridine_kinase"/>
</dbReference>
<dbReference type="InterPro" id="IPR000764">
    <property type="entry name" value="Uridine_kinase-like"/>
</dbReference>
<dbReference type="NCBIfam" id="NF004018">
    <property type="entry name" value="PRK05480.1"/>
    <property type="match status" value="1"/>
</dbReference>
<dbReference type="NCBIfam" id="TIGR00235">
    <property type="entry name" value="udk"/>
    <property type="match status" value="1"/>
</dbReference>
<dbReference type="PANTHER" id="PTHR10285">
    <property type="entry name" value="URIDINE KINASE"/>
    <property type="match status" value="1"/>
</dbReference>
<dbReference type="Pfam" id="PF00485">
    <property type="entry name" value="PRK"/>
    <property type="match status" value="1"/>
</dbReference>
<dbReference type="PRINTS" id="PR00988">
    <property type="entry name" value="URIDINKINASE"/>
</dbReference>
<dbReference type="SUPFAM" id="SSF52540">
    <property type="entry name" value="P-loop containing nucleoside triphosphate hydrolases"/>
    <property type="match status" value="1"/>
</dbReference>
<comment type="catalytic activity">
    <reaction evidence="1">
        <text>uridine + ATP = UMP + ADP + H(+)</text>
        <dbReference type="Rhea" id="RHEA:16825"/>
        <dbReference type="ChEBI" id="CHEBI:15378"/>
        <dbReference type="ChEBI" id="CHEBI:16704"/>
        <dbReference type="ChEBI" id="CHEBI:30616"/>
        <dbReference type="ChEBI" id="CHEBI:57865"/>
        <dbReference type="ChEBI" id="CHEBI:456216"/>
        <dbReference type="EC" id="2.7.1.48"/>
    </reaction>
</comment>
<comment type="catalytic activity">
    <reaction evidence="1">
        <text>cytidine + ATP = CMP + ADP + H(+)</text>
        <dbReference type="Rhea" id="RHEA:24674"/>
        <dbReference type="ChEBI" id="CHEBI:15378"/>
        <dbReference type="ChEBI" id="CHEBI:17562"/>
        <dbReference type="ChEBI" id="CHEBI:30616"/>
        <dbReference type="ChEBI" id="CHEBI:60377"/>
        <dbReference type="ChEBI" id="CHEBI:456216"/>
        <dbReference type="EC" id="2.7.1.48"/>
    </reaction>
</comment>
<comment type="pathway">
    <text evidence="1">Pyrimidine metabolism; CTP biosynthesis via salvage pathway; CTP from cytidine: step 1/3.</text>
</comment>
<comment type="pathway">
    <text evidence="1">Pyrimidine metabolism; UMP biosynthesis via salvage pathway; UMP from uridine: step 1/1.</text>
</comment>
<comment type="subcellular location">
    <subcellularLocation>
        <location evidence="1">Cytoplasm</location>
    </subcellularLocation>
</comment>
<comment type="similarity">
    <text evidence="1">Belongs to the uridine kinase family.</text>
</comment>
<organism>
    <name type="scientific">Serratia proteamaculans (strain 568)</name>
    <dbReference type="NCBI Taxonomy" id="399741"/>
    <lineage>
        <taxon>Bacteria</taxon>
        <taxon>Pseudomonadati</taxon>
        <taxon>Pseudomonadota</taxon>
        <taxon>Gammaproteobacteria</taxon>
        <taxon>Enterobacterales</taxon>
        <taxon>Yersiniaceae</taxon>
        <taxon>Serratia</taxon>
    </lineage>
</organism>
<feature type="chain" id="PRO_1000061101" description="Uridine kinase">
    <location>
        <begin position="1"/>
        <end position="213"/>
    </location>
</feature>
<feature type="binding site" evidence="1">
    <location>
        <begin position="15"/>
        <end position="22"/>
    </location>
    <ligand>
        <name>ATP</name>
        <dbReference type="ChEBI" id="CHEBI:30616"/>
    </ligand>
</feature>